<protein>
    <recommendedName>
        <fullName evidence="4">Varicidin biosynthesis cluster MFS-type transporer</fullName>
    </recommendedName>
</protein>
<dbReference type="EMBL" id="MK376933">
    <property type="protein sequence ID" value="AZZ09609.1"/>
    <property type="molecule type" value="Genomic_DNA"/>
</dbReference>
<dbReference type="SMR" id="A0A3T0QHT2"/>
<dbReference type="GO" id="GO:0005886">
    <property type="term" value="C:plasma membrane"/>
    <property type="evidence" value="ECO:0007669"/>
    <property type="project" value="UniProtKB-SubCell"/>
</dbReference>
<dbReference type="GO" id="GO:0022857">
    <property type="term" value="F:transmembrane transporter activity"/>
    <property type="evidence" value="ECO:0007669"/>
    <property type="project" value="TreeGrafter"/>
</dbReference>
<dbReference type="Gene3D" id="1.20.1250.20">
    <property type="entry name" value="MFS general substrate transporter like domains"/>
    <property type="match status" value="1"/>
</dbReference>
<dbReference type="InterPro" id="IPR036259">
    <property type="entry name" value="MFS_trans_sf"/>
</dbReference>
<dbReference type="PANTHER" id="PTHR23501">
    <property type="entry name" value="MAJOR FACILITATOR SUPERFAMILY"/>
    <property type="match status" value="1"/>
</dbReference>
<dbReference type="PANTHER" id="PTHR23501:SF199">
    <property type="entry name" value="MFS EFFLUX TRANSPORTER INPD-RELATED"/>
    <property type="match status" value="1"/>
</dbReference>
<dbReference type="SUPFAM" id="SSF103473">
    <property type="entry name" value="MFS general substrate transporter"/>
    <property type="match status" value="1"/>
</dbReference>
<gene>
    <name evidence="4" type="primary">mfs</name>
</gene>
<reference key="1">
    <citation type="journal article" date="2019" name="J. Am. Chem. Soc.">
        <title>Genome-mined Diels-Alderase catalyzes formation of the cis-octahydrodecalins of varicidin A and B.</title>
        <authorList>
            <person name="Tan D."/>
            <person name="Jamieson C.S."/>
            <person name="Ohashi M."/>
            <person name="Tang M.C."/>
            <person name="Houk K.N."/>
            <person name="Tang Y."/>
        </authorList>
    </citation>
    <scope>NUCLEOTIDE SEQUENCE [GENOMIC DNA]</scope>
    <scope>FUNCTION</scope>
    <scope>CATALYTIC ACTIVITY</scope>
    <scope>PATHWAY</scope>
    <source>
        <strain>HXQ-H-1</strain>
    </source>
</reference>
<evidence type="ECO:0000255" key="1"/>
<evidence type="ECO:0000256" key="2">
    <source>
        <dbReference type="SAM" id="MobiDB-lite"/>
    </source>
</evidence>
<evidence type="ECO:0000269" key="3">
    <source>
    </source>
</evidence>
<evidence type="ECO:0000303" key="4">
    <source>
    </source>
</evidence>
<evidence type="ECO:0000305" key="5"/>
<comment type="function">
    <text evidence="3">MFS-type transporer; part of the gene cluster that mediates the biosynthesis of varicidin A, an antifungal natural product containing a cis-octahydrodecalin core.</text>
</comment>
<comment type="subcellular location">
    <subcellularLocation>
        <location evidence="5">Cell membrane</location>
        <topology evidence="1">Multi-pass membrane protein</topology>
    </subcellularLocation>
</comment>
<comment type="similarity">
    <text evidence="5">Belongs to the major facilitator superfamily. TCR/Tet family.</text>
</comment>
<name>PVHT_TALVA</name>
<sequence length="547" mass="59692">MTTSTSKNAISKSSQEDLCSDTKDKGSSGGGNEANAEASKAIQGFRLVLLFVGLALSVFCLSLVCISEFISTFLFTRTYPDVFGFGRIVQSWLRPFRELRPSLIPLTTWRGSAPLTCYPRVVFSFLLESCTRSSRYGACSLRRWVFSSWDHSSAHLAPSLLLPGLCPCIVAQSVFTDRATWRWCFWINLPLGGVTAVAVFLFVRLPSPQGGATTFLGLLQKLDALGTCILMPLIICLLLALQWGGTTYAWNSWRVVLCLVLFTVLLVAWLYVQYRQGDGGALPLRIVRQRSIRSAILFTFGINGSMFIIVYYVPIWFQAVKDVTAQQSGINFLACSGSMSVAAIIAGTLVSTGEEKQHQGQWRIFNYTTLVSIATGLIWRYNPATSTAYCRAGTLVMFGFGAGSGMQMPFIAAQTVLSASDISLGSSLIILIQTMGGAVFLAVSQNLFQSKLIGLLESHPYGVEPEFILDTGASGLRSAVQHKYGTKAVETVLQAYNTALRQCFLVCIVLACLTIIADAGMEWKNVRAGKKPAKAPDAHHESKTDIK</sequence>
<proteinExistence type="evidence at protein level"/>
<keyword id="KW-1003">Cell membrane</keyword>
<keyword id="KW-0472">Membrane</keyword>
<keyword id="KW-0812">Transmembrane</keyword>
<keyword id="KW-1133">Transmembrane helix</keyword>
<keyword id="KW-0813">Transport</keyword>
<organism>
    <name type="scientific">Talaromyces variabilis</name>
    <name type="common">Penicillium variabile</name>
    <dbReference type="NCBI Taxonomy" id="28576"/>
    <lineage>
        <taxon>Eukaryota</taxon>
        <taxon>Fungi</taxon>
        <taxon>Dikarya</taxon>
        <taxon>Ascomycota</taxon>
        <taxon>Pezizomycotina</taxon>
        <taxon>Eurotiomycetes</taxon>
        <taxon>Eurotiomycetidae</taxon>
        <taxon>Eurotiales</taxon>
        <taxon>Trichocomaceae</taxon>
        <taxon>Talaromyces</taxon>
    </lineage>
</organism>
<accession>A0A3T0QHT2</accession>
<feature type="chain" id="PRO_0000453355" description="Varicidin biosynthesis cluster MFS-type transporer">
    <location>
        <begin position="1"/>
        <end position="547"/>
    </location>
</feature>
<feature type="transmembrane region" description="Helical" evidence="1">
    <location>
        <begin position="47"/>
        <end position="67"/>
    </location>
</feature>
<feature type="transmembrane region" description="Helical" evidence="1">
    <location>
        <begin position="156"/>
        <end position="176"/>
    </location>
</feature>
<feature type="transmembrane region" description="Helical" evidence="1">
    <location>
        <begin position="183"/>
        <end position="203"/>
    </location>
</feature>
<feature type="transmembrane region" description="Helical" evidence="1">
    <location>
        <begin position="224"/>
        <end position="244"/>
    </location>
</feature>
<feature type="transmembrane region" description="Helical" evidence="1">
    <location>
        <begin position="252"/>
        <end position="272"/>
    </location>
</feature>
<feature type="transmembrane region" description="Helical" evidence="1">
    <location>
        <begin position="296"/>
        <end position="316"/>
    </location>
</feature>
<feature type="transmembrane region" description="Helical" evidence="1">
    <location>
        <begin position="330"/>
        <end position="350"/>
    </location>
</feature>
<feature type="transmembrane region" description="Helical" evidence="1">
    <location>
        <begin position="360"/>
        <end position="382"/>
    </location>
</feature>
<feature type="transmembrane region" description="Helical" evidence="1">
    <location>
        <begin position="392"/>
        <end position="412"/>
    </location>
</feature>
<feature type="transmembrane region" description="Helical" evidence="1">
    <location>
        <begin position="422"/>
        <end position="442"/>
    </location>
</feature>
<feature type="transmembrane region" description="Helical" evidence="1">
    <location>
        <begin position="503"/>
        <end position="523"/>
    </location>
</feature>
<feature type="region of interest" description="Disordered" evidence="2">
    <location>
        <begin position="1"/>
        <end position="33"/>
    </location>
</feature>
<feature type="compositionally biased region" description="Polar residues" evidence="2">
    <location>
        <begin position="1"/>
        <end position="17"/>
    </location>
</feature>